<organismHost>
    <name type="scientific">Homo sapiens</name>
    <name type="common">Human</name>
    <dbReference type="NCBI Taxonomy" id="9606"/>
</organismHost>
<comment type="function">
    <text evidence="2 5 6 7 9 10">Prevents the establishment of cellular antiviral state by blocking virus-induced phosphorylation and activation of host interferon regulatory factor 7/IRF7, a transcription factor critical for the induction of interferons alpha and beta (PubMed:11943871, PubMed:20485504, PubMed:22787218). Mechanistically, ORF45 competes with the associated IRF7 and inhibits its phosphorylation by IKBKE or TBK1 by acting as an alternative substrate (PubMed:11943871, PubMed:22787218). Acts as an activator of the NLRP1 inflammasome via interaction with the N-terminal part of host NLRP1: interaction promotes translocation of the N-terminal part of NLRP1 into the nucleus, relieving autoinhibition of the NLRP1 inflammasome and leading to its activation (PubMed:35618833). Also plays a role in promoting the late transcription and translation of viral lytic genes by constitutively activating host extracellular signal-regulated kinase (ERK)-p90 ribosomal S6 kinase/RPS6KA1 (PubMed:30842327). In addition, supports the viral replication cycle by modulating host p53/TP53 signaling pathway (PubMed:34523970). Interacts with host p53/TP53 and prevents its interaction with the deubiquitinase USP7, leading to sequestration of P53/TP53 in the host cytoplasm thereby diminishing its transcriptional activity (PubMed:34523970).</text>
</comment>
<comment type="subunit">
    <text evidence="2 7 8 9 10">Interacts with host IRF7 (PubMed:11943871). Interacts with host RPS6KA1 (PubMed:30842327). Interacts with host RAB11FIP5; this interaction results in the lysosomal degradation of ORF45 and the inhibition of viral particle release (PubMed:33315947). Interacts with host p53/TP53; this interaction down-regulates p53/TP53 signaling pathway (PubMed:34523970). Interacts with the N-terminal part of host NLRP1; relieving autoinhibition of the NLRP1 inflammasome (PubMed:35618833).</text>
</comment>
<comment type="interaction">
    <interactant intactId="EBI-8843990">
        <id>F5HDE4</id>
    </interactant>
    <interactant intactId="EBI-968267">
        <id>Q92985</id>
        <label>IRF7</label>
    </interactant>
    <organismsDiffer>true</organismsDiffer>
    <experiments>3</experiments>
</comment>
<comment type="subcellular location">
    <subcellularLocation>
        <location evidence="3">Virion tegument</location>
    </subcellularLocation>
    <subcellularLocation>
        <location evidence="4">Host cytoplasm</location>
    </subcellularLocation>
    <subcellularLocation>
        <location evidence="4 10">Host nucleus</location>
    </subcellularLocation>
    <subcellularLocation>
        <location evidence="8">Host Golgi apparatus</location>
    </subcellularLocation>
</comment>
<comment type="PTM">
    <text evidence="2 6">Phosphorylated on Ser-41 and Ser-162 by host IKBKE and TBK1.</text>
</comment>
<reference key="1">
    <citation type="journal article" date="1999" name="J. Virol.">
        <title>Identification of a spliced gene from Kaposi's sarcoma-associated herpesvirus encoding a protein with similarities to latent membrane proteins 1 and 2A of Epstein-Barr virus.</title>
        <authorList>
            <person name="Glenn M."/>
            <person name="Rainbow L."/>
            <person name="Aurade F."/>
            <person name="Davison A."/>
            <person name="Schulz T.F."/>
        </authorList>
    </citation>
    <scope>NUCLEOTIDE SEQUENCE [LARGE SCALE GENOMIC DNA]</scope>
</reference>
<reference key="2">
    <citation type="journal article" date="2006" name="J. Gen. Virol.">
        <title>Kaposi's sarcoma-associated herpesvirus immune modulation: an overview.</title>
        <authorList>
            <person name="Rezaee S.A.R."/>
            <person name="Cunningham C."/>
            <person name="Davison A.J."/>
            <person name="Blackbourn D.J."/>
        </authorList>
    </citation>
    <scope>NUCLEOTIDE SEQUENCE [LARGE SCALE GENOMIC DNA]</scope>
</reference>
<reference key="3">
    <citation type="journal article" date="2002" name="Proc. Natl. Acad. Sci. U.S.A.">
        <title>A Kaposi's sarcoma-associated herpesviral protein inhibits virus-mediated induction of type I interferon by blocking IRF-7 phosphorylation and nuclear accumulation.</title>
        <authorList>
            <person name="Zhu F.X."/>
            <person name="King S.M."/>
            <person name="Smith E.J."/>
            <person name="Levy D.E."/>
            <person name="Yuan Y."/>
        </authorList>
    </citation>
    <scope>INTERACTION WITH HOST IRF7</scope>
    <scope>PHOSPHORYLATION AT SER-41 AND SER-162</scope>
    <scope>FUNCTION</scope>
</reference>
<reference key="4">
    <citation type="journal article" date="2003" name="J. Virol.">
        <title>The ORF45 protein of Kaposi's sarcoma-associated herpesvirus is associated with purified virions.</title>
        <authorList>
            <person name="Zhu F.X."/>
            <person name="Yuan Y."/>
        </authorList>
    </citation>
    <scope>SUBCELLULAR LOCATION</scope>
</reference>
<reference key="5">
    <citation type="journal article" date="2004" name="Front. Biosci.">
        <title>Kaposi's sarcoma-associated herpesvirus immediate early gene activity.</title>
        <authorList>
            <person name="Lacoste V."/>
            <person name="de la Fuente C."/>
            <person name="Kashanchi F."/>
            <person name="Pumfery A."/>
        </authorList>
    </citation>
    <scope>EARLY PROTEIN</scope>
</reference>
<reference key="6">
    <citation type="journal article" date="2009" name="J. Virol.">
        <title>Identification of the nuclear export and adjacent nuclear localization signals for ORF45 of Kaposi's sarcoma-associated herpesvirus.</title>
        <authorList>
            <person name="Li X."/>
            <person name="Zhu F."/>
        </authorList>
    </citation>
    <scope>NUCLEAR EXPORT SIGNAL</scope>
    <scope>SUBCELLULAR LOCATION</scope>
</reference>
<reference key="7">
    <citation type="journal article" date="2010" name="PLoS ONE">
        <title>Antagonism of host antiviral responses by Kaposi's sarcoma-associated herpesvirus tegument protein ORF45.</title>
        <authorList>
            <person name="Zhu F.X."/>
            <person name="Sathish N."/>
            <person name="Yuan Y."/>
        </authorList>
    </citation>
    <scope>FUNCTION</scope>
</reference>
<reference key="8">
    <citation type="journal article" date="2012" name="J. Virol.">
        <title>ORF45 of Kaposi's sarcoma-associated herpesvirus inhibits phosphorylation of interferon regulatory factor 7 by IKKepsilon and TBK1 as an alternative substrate.</title>
        <authorList>
            <person name="Liang Q."/>
            <person name="Fu B."/>
            <person name="Wu F."/>
            <person name="Li X."/>
            <person name="Yuan Y."/>
            <person name="Zhu F."/>
        </authorList>
    </citation>
    <scope>FUNCTION</scope>
    <scope>PHOSPHORYLATION AT SER-41 AND SER-162</scope>
    <scope>MUTAGENESIS OF SER-41 AND SER-162</scope>
</reference>
<reference key="9">
    <citation type="journal article" date="2019" name="J. Virol.">
        <title>Development of an ORF45-Derived Peptide To Inhibit the Sustained RSK Activation and Lytic Replication of Kaposi's Sarcoma-Associated Herpesvirus.</title>
        <authorList>
            <person name="Li X."/>
            <person name="Huang L."/>
            <person name="Xiao Y."/>
            <person name="Yao X."/>
            <person name="Long X."/>
            <person name="Zhu F."/>
            <person name="Kuang E."/>
        </authorList>
    </citation>
    <scope>FUNCTION</scope>
    <scope>MUTAGENESIS OF PHE-66</scope>
    <scope>INTERACTION WITH HOST RPS6KA1</scope>
</reference>
<reference key="10">
    <citation type="journal article" date="2020" name="PLoS Pathog.">
        <title>Host RAB11FIP5 protein inhibits the release of Kaposi's sarcoma-associated herpesvirus particles by promoting lysosomal degradation of ORF45.</title>
        <authorList>
            <person name="Wei X."/>
            <person name="Dong J."/>
            <person name="Cheng C.C."/>
            <person name="Ji M."/>
            <person name="Yu L."/>
            <person name="Luo S."/>
            <person name="Wu S."/>
            <person name="Bai L."/>
            <person name="Lan K."/>
        </authorList>
    </citation>
    <scope>INTERACTION WITH HOST RAB11FIP5</scope>
    <scope>SUBCELLULAR LOCATION</scope>
</reference>
<reference key="11">
    <citation type="journal article" date="2021" name="J. Virol.">
        <title>The ORF45 protein of Kaposi Sarcoma-associated Herpesvirus (KSHV) is an inhibitor of p53 signaling during viral reactivation.</title>
        <authorList>
            <person name="Alzhanova D."/>
            <person name="Meyo J.O."/>
            <person name="Juarez A."/>
            <person name="Dittmer D.P."/>
        </authorList>
    </citation>
    <scope>FUNCTION</scope>
    <scope>INTERACTION WITH HOST TP53</scope>
    <scope>MUTAGENESIS OF GLU-223 AND SER-226</scope>
</reference>
<reference key="12">
    <citation type="journal article" date="2022" name="Nat. Immunol.">
        <title>KSHV-encoded ORF45 activates human NLRP1 inflammasome.</title>
        <authorList>
            <person name="Yang X."/>
            <person name="Zhou J."/>
            <person name="Liu C."/>
            <person name="Qu Y."/>
            <person name="Wang W."/>
            <person name="Xiao M.Z.X."/>
            <person name="Zhu F."/>
            <person name="Liu Z."/>
            <person name="Liang Q."/>
        </authorList>
    </citation>
    <scope>FUNCTION</scope>
    <scope>SUBCELLULAR LOCATION</scope>
    <scope>INTERACTION WITH HOST NLRP1</scope>
</reference>
<keyword id="KW-0002">3D-structure</keyword>
<keyword id="KW-0244">Early protein</keyword>
<keyword id="KW-1035">Host cytoplasm</keyword>
<keyword id="KW-1040">Host Golgi apparatus</keyword>
<keyword id="KW-1048">Host nucleus</keyword>
<keyword id="KW-0945">Host-virus interaction</keyword>
<keyword id="KW-1090">Inhibition of host innate immune response by virus</keyword>
<keyword id="KW-1093">Inhibition of host IRF7 by virus</keyword>
<keyword id="KW-1113">Inhibition of host RLR pathway by virus</keyword>
<keyword id="KW-0597">Phosphoprotein</keyword>
<keyword id="KW-1185">Reference proteome</keyword>
<keyword id="KW-0899">Viral immunoevasion</keyword>
<keyword id="KW-0946">Virion</keyword>
<keyword id="KW-0920">Virion tegument</keyword>
<name>ORF45_HHV8P</name>
<gene>
    <name type="primary">ORF45</name>
</gene>
<organism>
    <name type="scientific">Human herpesvirus 8 type P (isolate GK18)</name>
    <name type="common">HHV-8</name>
    <name type="synonym">Kaposi's sarcoma-associated herpesvirus</name>
    <dbReference type="NCBI Taxonomy" id="868565"/>
    <lineage>
        <taxon>Viruses</taxon>
        <taxon>Duplodnaviria</taxon>
        <taxon>Heunggongvirae</taxon>
        <taxon>Peploviricota</taxon>
        <taxon>Herviviricetes</taxon>
        <taxon>Herpesvirales</taxon>
        <taxon>Orthoherpesviridae</taxon>
        <taxon>Gammaherpesvirinae</taxon>
        <taxon>Rhadinovirus</taxon>
        <taxon>Rhadinovirus humangamma8</taxon>
        <taxon>Human herpesvirus 8</taxon>
    </lineage>
</organism>
<proteinExistence type="evidence at protein level"/>
<evidence type="ECO:0000256" key="1">
    <source>
        <dbReference type="SAM" id="MobiDB-lite"/>
    </source>
</evidence>
<evidence type="ECO:0000269" key="2">
    <source>
    </source>
</evidence>
<evidence type="ECO:0000269" key="3">
    <source>
    </source>
</evidence>
<evidence type="ECO:0000269" key="4">
    <source>
    </source>
</evidence>
<evidence type="ECO:0000269" key="5">
    <source>
    </source>
</evidence>
<evidence type="ECO:0000269" key="6">
    <source>
    </source>
</evidence>
<evidence type="ECO:0000269" key="7">
    <source>
    </source>
</evidence>
<evidence type="ECO:0000269" key="8">
    <source>
    </source>
</evidence>
<evidence type="ECO:0000269" key="9">
    <source>
    </source>
</evidence>
<evidence type="ECO:0000269" key="10">
    <source>
    </source>
</evidence>
<evidence type="ECO:0007829" key="11">
    <source>
        <dbReference type="PDB" id="7OPO"/>
    </source>
</evidence>
<protein>
    <recommendedName>
        <fullName>Protein ORF45</fullName>
    </recommendedName>
</protein>
<sequence length="407" mass="43327">MAMFVRTSSSTHDEERMLPIEGAPRRRPPVKFIFPPPPLSSLPGFGRPRGYAGPTVIDMSAPDDVFAEDTPSPPATPLDLQISPDQSSGESEYDEDEEDEDEEENDDVQEEDEPEGYPADFFQPLSHLRPRPLARRAHTPKPVAVVAGRVRSSTDTAESEASMGWVSQDDGFSPAGLSPSDDEGVAILEPMAAYTGTGAYGLSPASRNSVPGTQSSPYSDPDEGPSWRPLRAAPTAIVDLTSDSDSDDSSNSPDVNNEAAFTDARHFSHQPPSSEEDGEDQGEVLSQRIGLMDVGQKRKRQSTASSGSEDVVRCQRQPNLSRKAVASVIIISSGSDTDEEPSSAVSVIVSPSSTKGHLPTQSPSTSAHSISSGSTTTAGSRCSDPTRILASTPPLCGNGAYNWPWLD</sequence>
<dbReference type="EMBL" id="AF148805">
    <property type="protein sequence ID" value="ABD28895.1"/>
    <property type="molecule type" value="Genomic_DNA"/>
</dbReference>
<dbReference type="RefSeq" id="YP_001129397.1">
    <property type="nucleotide sequence ID" value="NC_009333.1"/>
</dbReference>
<dbReference type="PDB" id="7OPM">
    <property type="method" value="X-ray"/>
    <property type="resolution" value="2.45 A"/>
    <property type="chains" value="C=27-40"/>
</dbReference>
<dbReference type="PDB" id="7OPO">
    <property type="method" value="X-ray"/>
    <property type="resolution" value="2.75 A"/>
    <property type="chains" value="B/D/F/H/J/L=16-76"/>
</dbReference>
<dbReference type="PDBsum" id="7OPM"/>
<dbReference type="PDBsum" id="7OPO"/>
<dbReference type="SMR" id="F5HDE4"/>
<dbReference type="BioGRID" id="1776977">
    <property type="interactions" value="19"/>
</dbReference>
<dbReference type="IntAct" id="F5HDE4">
    <property type="interactions" value="1"/>
</dbReference>
<dbReference type="iPTMnet" id="F5HDE4"/>
<dbReference type="DNASU" id="4961474"/>
<dbReference type="GeneID" id="4961474"/>
<dbReference type="KEGG" id="vg:4961474"/>
<dbReference type="Proteomes" id="UP000000942">
    <property type="component" value="Segment"/>
</dbReference>
<dbReference type="GO" id="GO:0044177">
    <property type="term" value="C:host cell Golgi apparatus"/>
    <property type="evidence" value="ECO:0007669"/>
    <property type="project" value="UniProtKB-SubCell"/>
</dbReference>
<dbReference type="GO" id="GO:0042025">
    <property type="term" value="C:host cell nucleus"/>
    <property type="evidence" value="ECO:0000314"/>
    <property type="project" value="UniProtKB"/>
</dbReference>
<dbReference type="GO" id="GO:0019033">
    <property type="term" value="C:viral tegument"/>
    <property type="evidence" value="ECO:0000314"/>
    <property type="project" value="CACAO"/>
</dbReference>
<dbReference type="GO" id="GO:0052167">
    <property type="term" value="P:symbiont-mediated perturbation of host innate immune response"/>
    <property type="evidence" value="ECO:0000314"/>
    <property type="project" value="UniProtKB"/>
</dbReference>
<dbReference type="GO" id="GO:0039557">
    <property type="term" value="P:symbiont-mediated suppression of host cytoplasmic pattern recognition receptor signaling pathway via inhibition of IRF7 activity"/>
    <property type="evidence" value="ECO:0007669"/>
    <property type="project" value="UniProtKB-KW"/>
</dbReference>
<feature type="chain" id="PRO_0000423770" description="Protein ORF45">
    <location>
        <begin position="1"/>
        <end position="407"/>
    </location>
</feature>
<feature type="region of interest" description="Disordered" evidence="1">
    <location>
        <begin position="1"/>
        <end position="183"/>
    </location>
</feature>
<feature type="region of interest" description="Disordered" evidence="1">
    <location>
        <begin position="196"/>
        <end position="318"/>
    </location>
</feature>
<feature type="region of interest" description="Disordered" evidence="1">
    <location>
        <begin position="332"/>
        <end position="407"/>
    </location>
</feature>
<feature type="short sequence motif" description="Nuclear export signal">
    <location>
        <begin position="284"/>
        <end position="294"/>
    </location>
</feature>
<feature type="short sequence motif" description="Nuclear localization signal">
    <location>
        <begin position="297"/>
        <end position="300"/>
    </location>
</feature>
<feature type="compositionally biased region" description="Polar residues" evidence="1">
    <location>
        <begin position="1"/>
        <end position="10"/>
    </location>
</feature>
<feature type="compositionally biased region" description="Acidic residues" evidence="1">
    <location>
        <begin position="91"/>
        <end position="115"/>
    </location>
</feature>
<feature type="compositionally biased region" description="Basic residues" evidence="1">
    <location>
        <begin position="128"/>
        <end position="139"/>
    </location>
</feature>
<feature type="compositionally biased region" description="Polar residues" evidence="1">
    <location>
        <begin position="205"/>
        <end position="218"/>
    </location>
</feature>
<feature type="compositionally biased region" description="Low complexity" evidence="1">
    <location>
        <begin position="342"/>
        <end position="353"/>
    </location>
</feature>
<feature type="compositionally biased region" description="Low complexity" evidence="1">
    <location>
        <begin position="360"/>
        <end position="383"/>
    </location>
</feature>
<feature type="modified residue" description="Phosphoserine; by host TBK1 and IKKE" evidence="2 6">
    <location>
        <position position="41"/>
    </location>
</feature>
<feature type="modified residue" description="Phosphoserine; by host TBK1 and IKKE" evidence="2 6">
    <location>
        <position position="162"/>
    </location>
</feature>
<feature type="mutagenesis site" description="Impairs the inhibition of host IRF7 transactivation activity." evidence="6">
    <original>S</original>
    <variation>A</variation>
    <location>
        <position position="41"/>
    </location>
</feature>
<feature type="mutagenesis site" description="Loss of sustained host ERK-RSK activation and decreases lytic replication." evidence="7">
    <original>F</original>
    <variation>A</variation>
    <location>
        <position position="66"/>
    </location>
</feature>
<feature type="mutagenesis site" description="Impairs the inhibition of host IRF7 transactivation activity." evidence="6">
    <original>S</original>
    <variation>A</variation>
    <location>
        <position position="162"/>
    </location>
</feature>
<feature type="mutagenesis site" description="Loss of p53/TP53 sequestration to the host cytoplasm; when associated with A-226." evidence="9">
    <original>E</original>
    <variation>A</variation>
    <location>
        <position position="223"/>
    </location>
</feature>
<feature type="mutagenesis site" description="Loss of p53/TP53 sequestration to the host cytoplasm; when associated with A-223." evidence="9">
    <original>S</original>
    <variation>A</variation>
    <location>
        <position position="226"/>
    </location>
</feature>
<feature type="strand" evidence="11">
    <location>
        <begin position="39"/>
        <end position="41"/>
    </location>
</feature>
<feature type="strand" evidence="11">
    <location>
        <begin position="56"/>
        <end position="58"/>
    </location>
</feature>
<feature type="strand" evidence="11">
    <location>
        <begin position="63"/>
        <end position="66"/>
    </location>
</feature>
<accession>F5HDE4</accession>